<protein>
    <recommendedName>
        <fullName>Uncharacterized protein HI_0557</fullName>
    </recommendedName>
</protein>
<proteinExistence type="predicted"/>
<reference key="1">
    <citation type="journal article" date="1995" name="Science">
        <title>Whole-genome random sequencing and assembly of Haemophilus influenzae Rd.</title>
        <authorList>
            <person name="Fleischmann R.D."/>
            <person name="Adams M.D."/>
            <person name="White O."/>
            <person name="Clayton R.A."/>
            <person name="Kirkness E.F."/>
            <person name="Kerlavage A.R."/>
            <person name="Bult C.J."/>
            <person name="Tomb J.-F."/>
            <person name="Dougherty B.A."/>
            <person name="Merrick J.M."/>
            <person name="McKenney K."/>
            <person name="Sutton G.G."/>
            <person name="FitzHugh W."/>
            <person name="Fields C.A."/>
            <person name="Gocayne J.D."/>
            <person name="Scott J.D."/>
            <person name="Shirley R."/>
            <person name="Liu L.-I."/>
            <person name="Glodek A."/>
            <person name="Kelley J.M."/>
            <person name="Weidman J.F."/>
            <person name="Phillips C.A."/>
            <person name="Spriggs T."/>
            <person name="Hedblom E."/>
            <person name="Cotton M.D."/>
            <person name="Utterback T.R."/>
            <person name="Hanna M.C."/>
            <person name="Nguyen D.T."/>
            <person name="Saudek D.M."/>
            <person name="Brandon R.C."/>
            <person name="Fine L.D."/>
            <person name="Fritchman J.L."/>
            <person name="Fuhrmann J.L."/>
            <person name="Geoghagen N.S.M."/>
            <person name="Gnehm C.L."/>
            <person name="McDonald L.A."/>
            <person name="Small K.V."/>
            <person name="Fraser C.M."/>
            <person name="Smith H.O."/>
            <person name="Venter J.C."/>
        </authorList>
    </citation>
    <scope>NUCLEOTIDE SEQUENCE [LARGE SCALE GENOMIC DNA]</scope>
    <source>
        <strain>ATCC 51907 / DSM 11121 / KW20 / Rd</strain>
    </source>
</reference>
<name>Y557_HAEIN</name>
<dbReference type="EMBL" id="L42023">
    <property type="protein sequence ID" value="AAC22218.1"/>
    <property type="molecule type" value="Genomic_DNA"/>
</dbReference>
<dbReference type="PIR" id="F64009">
    <property type="entry name" value="F64009"/>
</dbReference>
<dbReference type="SMR" id="P44015"/>
<dbReference type="STRING" id="71421.HI_0557"/>
<dbReference type="EnsemblBacteria" id="AAC22218">
    <property type="protein sequence ID" value="AAC22218"/>
    <property type="gene ID" value="HI_0557"/>
</dbReference>
<dbReference type="KEGG" id="hin:HI_0557"/>
<dbReference type="HOGENOM" id="CLU_3290450_0_0_6"/>
<dbReference type="Proteomes" id="UP000000579">
    <property type="component" value="Chromosome"/>
</dbReference>
<feature type="chain" id="PRO_0000077933" description="Uncharacterized protein HI_0557">
    <location>
        <begin position="1"/>
        <end position="40"/>
    </location>
</feature>
<gene>
    <name type="ordered locus">HI_0557</name>
</gene>
<accession>P44015</accession>
<keyword id="KW-1185">Reference proteome</keyword>
<organism>
    <name type="scientific">Haemophilus influenzae (strain ATCC 51907 / DSM 11121 / KW20 / Rd)</name>
    <dbReference type="NCBI Taxonomy" id="71421"/>
    <lineage>
        <taxon>Bacteria</taxon>
        <taxon>Pseudomonadati</taxon>
        <taxon>Pseudomonadota</taxon>
        <taxon>Gammaproteobacteria</taxon>
        <taxon>Pasteurellales</taxon>
        <taxon>Pasteurellaceae</taxon>
        <taxon>Haemophilus</taxon>
    </lineage>
</organism>
<sequence>MNYISFPTAQHAVDKIAQEFVIYSQLNHSRTYFPFWWFDA</sequence>